<keyword id="KW-1185">Reference proteome</keyword>
<keyword id="KW-0687">Ribonucleoprotein</keyword>
<keyword id="KW-0689">Ribosomal protein</keyword>
<feature type="chain" id="PRO_0000133756" description="Large ribosomal subunit protein uL13">
    <location>
        <begin position="1"/>
        <end position="155"/>
    </location>
</feature>
<name>RL13_AERPE</name>
<comment type="function">
    <text evidence="1">This protein is one of the early assembly proteins of the 50S ribosomal subunit, although it is not seen to bind rRNA by itself. It is important during the early stages of 50S assembly.</text>
</comment>
<comment type="subunit">
    <text evidence="1">Part of the 50S ribosomal subunit.</text>
</comment>
<comment type="similarity">
    <text evidence="1">Belongs to the universal ribosomal protein uL13 family.</text>
</comment>
<dbReference type="EMBL" id="BA000002">
    <property type="protein sequence ID" value="BAA80748.1"/>
    <property type="molecule type" value="Genomic_DNA"/>
</dbReference>
<dbReference type="PIR" id="G72557">
    <property type="entry name" value="G72557"/>
</dbReference>
<dbReference type="RefSeq" id="WP_010866569.1">
    <property type="nucleotide sequence ID" value="NC_000854.2"/>
</dbReference>
<dbReference type="SMR" id="Q9YB50"/>
<dbReference type="STRING" id="272557.APE_1747"/>
<dbReference type="EnsemblBacteria" id="BAA80748">
    <property type="protein sequence ID" value="BAA80748"/>
    <property type="gene ID" value="APE_1747"/>
</dbReference>
<dbReference type="GeneID" id="1446214"/>
<dbReference type="KEGG" id="ape:APE_1747"/>
<dbReference type="eggNOG" id="arCOG04242">
    <property type="taxonomic scope" value="Archaea"/>
</dbReference>
<dbReference type="Proteomes" id="UP000002518">
    <property type="component" value="Chromosome"/>
</dbReference>
<dbReference type="GO" id="GO:0022625">
    <property type="term" value="C:cytosolic large ribosomal subunit"/>
    <property type="evidence" value="ECO:0007669"/>
    <property type="project" value="TreeGrafter"/>
</dbReference>
<dbReference type="GO" id="GO:0003729">
    <property type="term" value="F:mRNA binding"/>
    <property type="evidence" value="ECO:0007669"/>
    <property type="project" value="TreeGrafter"/>
</dbReference>
<dbReference type="GO" id="GO:0003735">
    <property type="term" value="F:structural constituent of ribosome"/>
    <property type="evidence" value="ECO:0007669"/>
    <property type="project" value="InterPro"/>
</dbReference>
<dbReference type="GO" id="GO:0017148">
    <property type="term" value="P:negative regulation of translation"/>
    <property type="evidence" value="ECO:0007669"/>
    <property type="project" value="TreeGrafter"/>
</dbReference>
<dbReference type="GO" id="GO:0006412">
    <property type="term" value="P:translation"/>
    <property type="evidence" value="ECO:0007669"/>
    <property type="project" value="UniProtKB-UniRule"/>
</dbReference>
<dbReference type="CDD" id="cd00392">
    <property type="entry name" value="Ribosomal_L13"/>
    <property type="match status" value="1"/>
</dbReference>
<dbReference type="Gene3D" id="3.90.1180.10">
    <property type="entry name" value="Ribosomal protein L13"/>
    <property type="match status" value="1"/>
</dbReference>
<dbReference type="HAMAP" id="MF_01366">
    <property type="entry name" value="Ribosomal_uL13"/>
    <property type="match status" value="1"/>
</dbReference>
<dbReference type="InterPro" id="IPR005822">
    <property type="entry name" value="Ribosomal_uL13"/>
</dbReference>
<dbReference type="InterPro" id="IPR005823">
    <property type="entry name" value="Ribosomal_uL13_bac-type"/>
</dbReference>
<dbReference type="InterPro" id="IPR023563">
    <property type="entry name" value="Ribosomal_uL13_CS"/>
</dbReference>
<dbReference type="InterPro" id="IPR005755">
    <property type="entry name" value="Ribosomal_uL13_euk/arc"/>
</dbReference>
<dbReference type="InterPro" id="IPR036899">
    <property type="entry name" value="Ribosomal_uL13_sf"/>
</dbReference>
<dbReference type="NCBIfam" id="TIGR01077">
    <property type="entry name" value="L13_A_E"/>
    <property type="match status" value="1"/>
</dbReference>
<dbReference type="NCBIfam" id="NF005004">
    <property type="entry name" value="PRK06394.1"/>
    <property type="match status" value="1"/>
</dbReference>
<dbReference type="PANTHER" id="PTHR11545:SF3">
    <property type="entry name" value="LARGE RIBOSOMAL SUBUNIT PROTEIN UL13"/>
    <property type="match status" value="1"/>
</dbReference>
<dbReference type="PANTHER" id="PTHR11545">
    <property type="entry name" value="RIBOSOMAL PROTEIN L13"/>
    <property type="match status" value="1"/>
</dbReference>
<dbReference type="Pfam" id="PF00572">
    <property type="entry name" value="Ribosomal_L13"/>
    <property type="match status" value="1"/>
</dbReference>
<dbReference type="PIRSF" id="PIRSF002181">
    <property type="entry name" value="Ribosomal_L13"/>
    <property type="match status" value="1"/>
</dbReference>
<dbReference type="SUPFAM" id="SSF52161">
    <property type="entry name" value="Ribosomal protein L13"/>
    <property type="match status" value="1"/>
</dbReference>
<dbReference type="PROSITE" id="PS00783">
    <property type="entry name" value="RIBOSOMAL_L13"/>
    <property type="match status" value="1"/>
</dbReference>
<reference key="1">
    <citation type="journal article" date="1999" name="DNA Res.">
        <title>Complete genome sequence of an aerobic hyper-thermophilic crenarchaeon, Aeropyrum pernix K1.</title>
        <authorList>
            <person name="Kawarabayasi Y."/>
            <person name="Hino Y."/>
            <person name="Horikawa H."/>
            <person name="Yamazaki S."/>
            <person name="Haikawa Y."/>
            <person name="Jin-no K."/>
            <person name="Takahashi M."/>
            <person name="Sekine M."/>
            <person name="Baba S."/>
            <person name="Ankai A."/>
            <person name="Kosugi H."/>
            <person name="Hosoyama A."/>
            <person name="Fukui S."/>
            <person name="Nagai Y."/>
            <person name="Nishijima K."/>
            <person name="Nakazawa H."/>
            <person name="Takamiya M."/>
            <person name="Masuda S."/>
            <person name="Funahashi T."/>
            <person name="Tanaka T."/>
            <person name="Kudoh Y."/>
            <person name="Yamazaki J."/>
            <person name="Kushida N."/>
            <person name="Oguchi A."/>
            <person name="Aoki K."/>
            <person name="Kubota K."/>
            <person name="Nakamura Y."/>
            <person name="Nomura N."/>
            <person name="Sako Y."/>
            <person name="Kikuchi H."/>
        </authorList>
    </citation>
    <scope>NUCLEOTIDE SEQUENCE [LARGE SCALE GENOMIC DNA]</scope>
    <source>
        <strain>ATCC 700893 / DSM 11879 / JCM 9820 / NBRC 100138 / K1</strain>
    </source>
</reference>
<organism>
    <name type="scientific">Aeropyrum pernix (strain ATCC 700893 / DSM 11879 / JCM 9820 / NBRC 100138 / K1)</name>
    <dbReference type="NCBI Taxonomy" id="272557"/>
    <lineage>
        <taxon>Archaea</taxon>
        <taxon>Thermoproteota</taxon>
        <taxon>Thermoprotei</taxon>
        <taxon>Desulfurococcales</taxon>
        <taxon>Desulfurococcaceae</taxon>
        <taxon>Aeropyrum</taxon>
    </lineage>
</organism>
<sequence>MLLAGGEAREIVVDGSGMIMGRLASVVAKLLLAGWRVNVVNAEKIVLSGDPRMVVESYRTTVLGVKSHFSHKWRPKRPRTPQRLFKHAVRGMLPKNKARGRRALARLRVYVGVPDELKGREFVRFPEADASRLSSHYIELGAVARQLGWKGGVEK</sequence>
<proteinExistence type="inferred from homology"/>
<accession>Q9YB50</accession>
<evidence type="ECO:0000255" key="1">
    <source>
        <dbReference type="HAMAP-Rule" id="MF_01366"/>
    </source>
</evidence>
<evidence type="ECO:0000305" key="2"/>
<gene>
    <name evidence="1" type="primary">rpl13</name>
    <name type="ordered locus">APE_1747</name>
</gene>
<protein>
    <recommendedName>
        <fullName evidence="1">Large ribosomal subunit protein uL13</fullName>
    </recommendedName>
    <alternativeName>
        <fullName evidence="2">50S ribosomal protein L13</fullName>
    </alternativeName>
</protein>